<sequence length="604" mass="66261">MGKKEVKKNKNEGDTPHIRTPIVCVLGHVDHGKTSLLDRIRGSSVVAGEAGAITQHIGATIVPIDSIMSMSGGMKNLNISIPGLLFIDTPGHHAFTTLRARGGALADMAIVVVDITEGFQPQTIEAIQILRNCKTPFVVAATKLDRIPGWRSTEKSPFLKSFAAQNERVTLLVETKVYDIVATLAEHGFSSERFDRVSDFARNLAIVPVSAHTGEGIPDLLMVLIGLAQRYMEEALTLTVDGPGSGTVLEVKEEKGLGATIDVILFDGTIRVGDEIAIATTEGVQTTKVRSLLQPRPMQEILVEDRFLRVKEVVAAAGVKVSAPGLDQVIAGSPVRVIGEDPEEVKTSIAKEMTEINVSLSPEGLIIKADTIGALEALCKELTAHEIPVMRAEVGQVSRHDVIEAETIKDPLYRVLIAFNTPVLPDAQDLLKEPAYAEMIQFFSGNVIYHILEDYLEWRNNLKRIMDQKRFEKIIFPAKILVLPGCVFRQNNPAVVGVRILSGTLRTGVNLVRRDGKKAGTLKSMQLRKENIQEAHAGDEVAISIEGATVGRQFDVEDELLVGIPERHVKVLETEMLSHLNEDAKEVLNEYTRLFRKENPFWGK</sequence>
<protein>
    <recommendedName>
        <fullName evidence="2">Probable translation initiation factor IF-2</fullName>
    </recommendedName>
</protein>
<dbReference type="EMBL" id="CP000254">
    <property type="protein sequence ID" value="ABD42189.1"/>
    <property type="molecule type" value="Genomic_DNA"/>
</dbReference>
<dbReference type="RefSeq" id="WP_011449447.1">
    <property type="nucleotide sequence ID" value="NC_007796.1"/>
</dbReference>
<dbReference type="SMR" id="Q2FU48"/>
<dbReference type="STRING" id="323259.Mhun_2489"/>
<dbReference type="EnsemblBacteria" id="ABD42189">
    <property type="protein sequence ID" value="ABD42189"/>
    <property type="gene ID" value="Mhun_2489"/>
</dbReference>
<dbReference type="GeneID" id="3924794"/>
<dbReference type="KEGG" id="mhu:Mhun_2489"/>
<dbReference type="eggNOG" id="arCOG01560">
    <property type="taxonomic scope" value="Archaea"/>
</dbReference>
<dbReference type="HOGENOM" id="CLU_002656_3_3_2"/>
<dbReference type="InParanoid" id="Q2FU48"/>
<dbReference type="OrthoDB" id="30957at2157"/>
<dbReference type="Proteomes" id="UP000001941">
    <property type="component" value="Chromosome"/>
</dbReference>
<dbReference type="GO" id="GO:0005737">
    <property type="term" value="C:cytoplasm"/>
    <property type="evidence" value="ECO:0007669"/>
    <property type="project" value="TreeGrafter"/>
</dbReference>
<dbReference type="GO" id="GO:0005525">
    <property type="term" value="F:GTP binding"/>
    <property type="evidence" value="ECO:0007669"/>
    <property type="project" value="UniProtKB-KW"/>
</dbReference>
<dbReference type="GO" id="GO:0003924">
    <property type="term" value="F:GTPase activity"/>
    <property type="evidence" value="ECO:0007669"/>
    <property type="project" value="UniProtKB-UniRule"/>
</dbReference>
<dbReference type="GO" id="GO:0003743">
    <property type="term" value="F:translation initiation factor activity"/>
    <property type="evidence" value="ECO:0007669"/>
    <property type="project" value="UniProtKB-UniRule"/>
</dbReference>
<dbReference type="CDD" id="cd03703">
    <property type="entry name" value="aeIF5B_II"/>
    <property type="match status" value="1"/>
</dbReference>
<dbReference type="CDD" id="cd16266">
    <property type="entry name" value="IF2_aeIF5B_IV"/>
    <property type="match status" value="1"/>
</dbReference>
<dbReference type="CDD" id="cd01887">
    <property type="entry name" value="IF2_eIF5B"/>
    <property type="match status" value="1"/>
</dbReference>
<dbReference type="FunFam" id="3.40.50.300:FF:000112">
    <property type="entry name" value="Eukaryotic translation initiation factor 5B"/>
    <property type="match status" value="1"/>
</dbReference>
<dbReference type="Gene3D" id="3.40.50.300">
    <property type="entry name" value="P-loop containing nucleotide triphosphate hydrolases"/>
    <property type="match status" value="1"/>
</dbReference>
<dbReference type="Gene3D" id="2.40.30.10">
    <property type="entry name" value="Translation factors"/>
    <property type="match status" value="2"/>
</dbReference>
<dbReference type="Gene3D" id="3.40.50.10050">
    <property type="entry name" value="Translation initiation factor IF- 2, domain 3"/>
    <property type="match status" value="1"/>
</dbReference>
<dbReference type="HAMAP" id="MF_00100_A">
    <property type="entry name" value="IF_2_A"/>
    <property type="match status" value="1"/>
</dbReference>
<dbReference type="InterPro" id="IPR004161">
    <property type="entry name" value="EFTu-like_2"/>
</dbReference>
<dbReference type="InterPro" id="IPR029459">
    <property type="entry name" value="EFTU-type"/>
</dbReference>
<dbReference type="InterPro" id="IPR027417">
    <property type="entry name" value="P-loop_NTPase"/>
</dbReference>
<dbReference type="InterPro" id="IPR005225">
    <property type="entry name" value="Small_GTP-bd"/>
</dbReference>
<dbReference type="InterPro" id="IPR000795">
    <property type="entry name" value="T_Tr_GTP-bd_dom"/>
</dbReference>
<dbReference type="InterPro" id="IPR004544">
    <property type="entry name" value="TF_aIF-2_arc"/>
</dbReference>
<dbReference type="InterPro" id="IPR015760">
    <property type="entry name" value="TIF_IF2"/>
</dbReference>
<dbReference type="InterPro" id="IPR023115">
    <property type="entry name" value="TIF_IF2_dom3"/>
</dbReference>
<dbReference type="InterPro" id="IPR036925">
    <property type="entry name" value="TIF_IF2_dom3_sf"/>
</dbReference>
<dbReference type="InterPro" id="IPR009000">
    <property type="entry name" value="Transl_B-barrel_sf"/>
</dbReference>
<dbReference type="NCBIfam" id="TIGR00491">
    <property type="entry name" value="aIF-2"/>
    <property type="match status" value="1"/>
</dbReference>
<dbReference type="NCBIfam" id="NF003078">
    <property type="entry name" value="PRK04004.1"/>
    <property type="match status" value="1"/>
</dbReference>
<dbReference type="NCBIfam" id="TIGR00231">
    <property type="entry name" value="small_GTP"/>
    <property type="match status" value="1"/>
</dbReference>
<dbReference type="PANTHER" id="PTHR43381:SF4">
    <property type="entry name" value="EUKARYOTIC TRANSLATION INITIATION FACTOR 5B"/>
    <property type="match status" value="1"/>
</dbReference>
<dbReference type="PANTHER" id="PTHR43381">
    <property type="entry name" value="TRANSLATION INITIATION FACTOR IF-2-RELATED"/>
    <property type="match status" value="1"/>
</dbReference>
<dbReference type="Pfam" id="PF00009">
    <property type="entry name" value="GTP_EFTU"/>
    <property type="match status" value="1"/>
</dbReference>
<dbReference type="Pfam" id="PF03144">
    <property type="entry name" value="GTP_EFTU_D2"/>
    <property type="match status" value="1"/>
</dbReference>
<dbReference type="Pfam" id="PF14578">
    <property type="entry name" value="GTP_EFTU_D4"/>
    <property type="match status" value="1"/>
</dbReference>
<dbReference type="Pfam" id="PF11987">
    <property type="entry name" value="IF-2"/>
    <property type="match status" value="1"/>
</dbReference>
<dbReference type="PRINTS" id="PR00315">
    <property type="entry name" value="ELONGATNFCT"/>
</dbReference>
<dbReference type="SUPFAM" id="SSF52156">
    <property type="entry name" value="Initiation factor IF2/eIF5b, domain 3"/>
    <property type="match status" value="1"/>
</dbReference>
<dbReference type="SUPFAM" id="SSF52540">
    <property type="entry name" value="P-loop containing nucleoside triphosphate hydrolases"/>
    <property type="match status" value="1"/>
</dbReference>
<dbReference type="SUPFAM" id="SSF50447">
    <property type="entry name" value="Translation proteins"/>
    <property type="match status" value="1"/>
</dbReference>
<dbReference type="PROSITE" id="PS51722">
    <property type="entry name" value="G_TR_2"/>
    <property type="match status" value="1"/>
</dbReference>
<accession>Q2FU48</accession>
<evidence type="ECO:0000250" key="1"/>
<evidence type="ECO:0000255" key="2">
    <source>
        <dbReference type="HAMAP-Rule" id="MF_00100"/>
    </source>
</evidence>
<feature type="chain" id="PRO_0000335531" description="Probable translation initiation factor IF-2">
    <location>
        <begin position="1"/>
        <end position="604"/>
    </location>
</feature>
<feature type="domain" description="tr-type G">
    <location>
        <begin position="18"/>
        <end position="232"/>
    </location>
</feature>
<feature type="region of interest" description="G1" evidence="1">
    <location>
        <begin position="27"/>
        <end position="34"/>
    </location>
</feature>
<feature type="region of interest" description="G2" evidence="1">
    <location>
        <begin position="52"/>
        <end position="56"/>
    </location>
</feature>
<feature type="region of interest" description="G3" evidence="1">
    <location>
        <begin position="88"/>
        <end position="91"/>
    </location>
</feature>
<feature type="region of interest" description="G4" evidence="1">
    <location>
        <begin position="142"/>
        <end position="145"/>
    </location>
</feature>
<feature type="region of interest" description="G5" evidence="1">
    <location>
        <begin position="210"/>
        <end position="212"/>
    </location>
</feature>
<feature type="binding site" evidence="2">
    <location>
        <begin position="27"/>
        <end position="34"/>
    </location>
    <ligand>
        <name>GTP</name>
        <dbReference type="ChEBI" id="CHEBI:37565"/>
    </ligand>
</feature>
<feature type="binding site" evidence="2">
    <location>
        <begin position="88"/>
        <end position="92"/>
    </location>
    <ligand>
        <name>GTP</name>
        <dbReference type="ChEBI" id="CHEBI:37565"/>
    </ligand>
</feature>
<feature type="binding site" evidence="2">
    <location>
        <begin position="142"/>
        <end position="145"/>
    </location>
    <ligand>
        <name>GTP</name>
        <dbReference type="ChEBI" id="CHEBI:37565"/>
    </ligand>
</feature>
<gene>
    <name evidence="2" type="primary">infB</name>
    <name type="ordered locus">Mhun_2489</name>
</gene>
<proteinExistence type="inferred from homology"/>
<organism>
    <name type="scientific">Methanospirillum hungatei JF-1 (strain ATCC 27890 / DSM 864 / NBRC 100397 / JF-1)</name>
    <dbReference type="NCBI Taxonomy" id="323259"/>
    <lineage>
        <taxon>Archaea</taxon>
        <taxon>Methanobacteriati</taxon>
        <taxon>Methanobacteriota</taxon>
        <taxon>Stenosarchaea group</taxon>
        <taxon>Methanomicrobia</taxon>
        <taxon>Methanomicrobiales</taxon>
        <taxon>Methanospirillaceae</taxon>
        <taxon>Methanospirillum</taxon>
    </lineage>
</organism>
<comment type="function">
    <text evidence="2">Function in general translation initiation by promoting the binding of the formylmethionine-tRNA to ribosomes. Seems to function along with eIF-2.</text>
</comment>
<comment type="similarity">
    <text evidence="2">Belongs to the TRAFAC class translation factor GTPase superfamily. Classic translation factor GTPase family. IF-2 subfamily.</text>
</comment>
<keyword id="KW-0342">GTP-binding</keyword>
<keyword id="KW-0396">Initiation factor</keyword>
<keyword id="KW-0547">Nucleotide-binding</keyword>
<keyword id="KW-0648">Protein biosynthesis</keyword>
<keyword id="KW-1185">Reference proteome</keyword>
<name>IF2P_METHJ</name>
<reference key="1">
    <citation type="journal article" date="2016" name="Stand. Genomic Sci.">
        <title>Complete genome sequence of Methanospirillum hungatei type strain JF1.</title>
        <authorList>
            <person name="Gunsalus R.P."/>
            <person name="Cook L.E."/>
            <person name="Crable B."/>
            <person name="Rohlin L."/>
            <person name="McDonald E."/>
            <person name="Mouttaki H."/>
            <person name="Sieber J.R."/>
            <person name="Poweleit N."/>
            <person name="Zhou H."/>
            <person name="Lapidus A.L."/>
            <person name="Daligault H.E."/>
            <person name="Land M."/>
            <person name="Gilna P."/>
            <person name="Ivanova N."/>
            <person name="Kyrpides N."/>
            <person name="Culley D.E."/>
            <person name="McInerney M.J."/>
        </authorList>
    </citation>
    <scope>NUCLEOTIDE SEQUENCE [LARGE SCALE GENOMIC DNA]</scope>
    <source>
        <strain>ATCC 27890 / DSM 864 / NBRC 100397 / JF-1</strain>
    </source>
</reference>